<dbReference type="EC" id="2.7.2.11" evidence="1"/>
<dbReference type="EMBL" id="CP000113">
    <property type="protein sequence ID" value="ABF87554.1"/>
    <property type="molecule type" value="Genomic_DNA"/>
</dbReference>
<dbReference type="RefSeq" id="WP_011551474.1">
    <property type="nucleotide sequence ID" value="NC_008095.1"/>
</dbReference>
<dbReference type="SMR" id="Q1DCK9"/>
<dbReference type="STRING" id="246197.MXAN_1357"/>
<dbReference type="EnsemblBacteria" id="ABF87554">
    <property type="protein sequence ID" value="ABF87554"/>
    <property type="gene ID" value="MXAN_1357"/>
</dbReference>
<dbReference type="GeneID" id="41358803"/>
<dbReference type="KEGG" id="mxa:MXAN_1357"/>
<dbReference type="eggNOG" id="COG0263">
    <property type="taxonomic scope" value="Bacteria"/>
</dbReference>
<dbReference type="HOGENOM" id="CLU_025400_2_0_7"/>
<dbReference type="OrthoDB" id="9804434at2"/>
<dbReference type="UniPathway" id="UPA00098">
    <property type="reaction ID" value="UER00359"/>
</dbReference>
<dbReference type="Proteomes" id="UP000002402">
    <property type="component" value="Chromosome"/>
</dbReference>
<dbReference type="GO" id="GO:0005829">
    <property type="term" value="C:cytosol"/>
    <property type="evidence" value="ECO:0007669"/>
    <property type="project" value="TreeGrafter"/>
</dbReference>
<dbReference type="GO" id="GO:0005524">
    <property type="term" value="F:ATP binding"/>
    <property type="evidence" value="ECO:0007669"/>
    <property type="project" value="UniProtKB-KW"/>
</dbReference>
<dbReference type="GO" id="GO:0004349">
    <property type="term" value="F:glutamate 5-kinase activity"/>
    <property type="evidence" value="ECO:0007669"/>
    <property type="project" value="UniProtKB-UniRule"/>
</dbReference>
<dbReference type="GO" id="GO:0003723">
    <property type="term" value="F:RNA binding"/>
    <property type="evidence" value="ECO:0007669"/>
    <property type="project" value="InterPro"/>
</dbReference>
<dbReference type="GO" id="GO:0055129">
    <property type="term" value="P:L-proline biosynthetic process"/>
    <property type="evidence" value="ECO:0007669"/>
    <property type="project" value="UniProtKB-UniRule"/>
</dbReference>
<dbReference type="CDD" id="cd04242">
    <property type="entry name" value="AAK_G5K_ProB"/>
    <property type="match status" value="1"/>
</dbReference>
<dbReference type="CDD" id="cd21157">
    <property type="entry name" value="PUA_G5K"/>
    <property type="match status" value="1"/>
</dbReference>
<dbReference type="FunFam" id="2.30.130.10:FF:000007">
    <property type="entry name" value="Glutamate 5-kinase"/>
    <property type="match status" value="1"/>
</dbReference>
<dbReference type="FunFam" id="3.40.1160.10:FF:000018">
    <property type="entry name" value="Glutamate 5-kinase"/>
    <property type="match status" value="1"/>
</dbReference>
<dbReference type="Gene3D" id="3.40.1160.10">
    <property type="entry name" value="Acetylglutamate kinase-like"/>
    <property type="match status" value="1"/>
</dbReference>
<dbReference type="Gene3D" id="2.30.130.10">
    <property type="entry name" value="PUA domain"/>
    <property type="match status" value="1"/>
</dbReference>
<dbReference type="HAMAP" id="MF_00456">
    <property type="entry name" value="ProB"/>
    <property type="match status" value="1"/>
</dbReference>
<dbReference type="InterPro" id="IPR036393">
    <property type="entry name" value="AceGlu_kinase-like_sf"/>
</dbReference>
<dbReference type="InterPro" id="IPR001048">
    <property type="entry name" value="Asp/Glu/Uridylate_kinase"/>
</dbReference>
<dbReference type="InterPro" id="IPR041739">
    <property type="entry name" value="G5K_ProB"/>
</dbReference>
<dbReference type="InterPro" id="IPR001057">
    <property type="entry name" value="Glu/AcGlu_kinase"/>
</dbReference>
<dbReference type="InterPro" id="IPR011529">
    <property type="entry name" value="Glu_5kinase"/>
</dbReference>
<dbReference type="InterPro" id="IPR005715">
    <property type="entry name" value="Glu_5kinase/COase_Synthase"/>
</dbReference>
<dbReference type="InterPro" id="IPR019797">
    <property type="entry name" value="Glutamate_5-kinase_CS"/>
</dbReference>
<dbReference type="InterPro" id="IPR002478">
    <property type="entry name" value="PUA"/>
</dbReference>
<dbReference type="InterPro" id="IPR015947">
    <property type="entry name" value="PUA-like_sf"/>
</dbReference>
<dbReference type="InterPro" id="IPR036974">
    <property type="entry name" value="PUA_sf"/>
</dbReference>
<dbReference type="NCBIfam" id="TIGR01027">
    <property type="entry name" value="proB"/>
    <property type="match status" value="1"/>
</dbReference>
<dbReference type="PANTHER" id="PTHR43654">
    <property type="entry name" value="GLUTAMATE 5-KINASE"/>
    <property type="match status" value="1"/>
</dbReference>
<dbReference type="PANTHER" id="PTHR43654:SF1">
    <property type="entry name" value="ISOPENTENYL PHOSPHATE KINASE"/>
    <property type="match status" value="1"/>
</dbReference>
<dbReference type="Pfam" id="PF00696">
    <property type="entry name" value="AA_kinase"/>
    <property type="match status" value="1"/>
</dbReference>
<dbReference type="Pfam" id="PF01472">
    <property type="entry name" value="PUA"/>
    <property type="match status" value="1"/>
</dbReference>
<dbReference type="PIRSF" id="PIRSF000729">
    <property type="entry name" value="GK"/>
    <property type="match status" value="1"/>
</dbReference>
<dbReference type="PRINTS" id="PR00474">
    <property type="entry name" value="GLU5KINASE"/>
</dbReference>
<dbReference type="SMART" id="SM00359">
    <property type="entry name" value="PUA"/>
    <property type="match status" value="1"/>
</dbReference>
<dbReference type="SUPFAM" id="SSF53633">
    <property type="entry name" value="Carbamate kinase-like"/>
    <property type="match status" value="1"/>
</dbReference>
<dbReference type="SUPFAM" id="SSF88697">
    <property type="entry name" value="PUA domain-like"/>
    <property type="match status" value="1"/>
</dbReference>
<dbReference type="PROSITE" id="PS00902">
    <property type="entry name" value="GLUTAMATE_5_KINASE"/>
    <property type="match status" value="1"/>
</dbReference>
<dbReference type="PROSITE" id="PS50890">
    <property type="entry name" value="PUA"/>
    <property type="match status" value="1"/>
</dbReference>
<reference key="1">
    <citation type="journal article" date="2006" name="Proc. Natl. Acad. Sci. U.S.A.">
        <title>Evolution of sensory complexity recorded in a myxobacterial genome.</title>
        <authorList>
            <person name="Goldman B.S."/>
            <person name="Nierman W.C."/>
            <person name="Kaiser D."/>
            <person name="Slater S.C."/>
            <person name="Durkin A.S."/>
            <person name="Eisen J.A."/>
            <person name="Ronning C.M."/>
            <person name="Barbazuk W.B."/>
            <person name="Blanchard M."/>
            <person name="Field C."/>
            <person name="Halling C."/>
            <person name="Hinkle G."/>
            <person name="Iartchuk O."/>
            <person name="Kim H.S."/>
            <person name="Mackenzie C."/>
            <person name="Madupu R."/>
            <person name="Miller N."/>
            <person name="Shvartsbeyn A."/>
            <person name="Sullivan S.A."/>
            <person name="Vaudin M."/>
            <person name="Wiegand R."/>
            <person name="Kaplan H.B."/>
        </authorList>
    </citation>
    <scope>NUCLEOTIDE SEQUENCE [LARGE SCALE GENOMIC DNA]</scope>
    <source>
        <strain>DK1622</strain>
    </source>
</reference>
<keyword id="KW-0028">Amino-acid biosynthesis</keyword>
<keyword id="KW-0067">ATP-binding</keyword>
<keyword id="KW-0963">Cytoplasm</keyword>
<keyword id="KW-0418">Kinase</keyword>
<keyword id="KW-0547">Nucleotide-binding</keyword>
<keyword id="KW-0641">Proline biosynthesis</keyword>
<keyword id="KW-1185">Reference proteome</keyword>
<keyword id="KW-0808">Transferase</keyword>
<organism>
    <name type="scientific">Myxococcus xanthus (strain DK1622)</name>
    <dbReference type="NCBI Taxonomy" id="246197"/>
    <lineage>
        <taxon>Bacteria</taxon>
        <taxon>Pseudomonadati</taxon>
        <taxon>Myxococcota</taxon>
        <taxon>Myxococcia</taxon>
        <taxon>Myxococcales</taxon>
        <taxon>Cystobacterineae</taxon>
        <taxon>Myxococcaceae</taxon>
        <taxon>Myxococcus</taxon>
    </lineage>
</organism>
<feature type="chain" id="PRO_0000252987" description="Glutamate 5-kinase">
    <location>
        <begin position="1"/>
        <end position="377"/>
    </location>
</feature>
<feature type="domain" description="PUA" evidence="1">
    <location>
        <begin position="285"/>
        <end position="363"/>
    </location>
</feature>
<feature type="binding site" evidence="1">
    <location>
        <position position="20"/>
    </location>
    <ligand>
        <name>ATP</name>
        <dbReference type="ChEBI" id="CHEBI:30616"/>
    </ligand>
</feature>
<feature type="binding site" evidence="1">
    <location>
        <position position="59"/>
    </location>
    <ligand>
        <name>substrate</name>
    </ligand>
</feature>
<feature type="binding site" evidence="1">
    <location>
        <position position="146"/>
    </location>
    <ligand>
        <name>substrate</name>
    </ligand>
</feature>
<feature type="binding site" evidence="1">
    <location>
        <position position="158"/>
    </location>
    <ligand>
        <name>substrate</name>
    </ligand>
</feature>
<feature type="binding site" evidence="1">
    <location>
        <begin position="178"/>
        <end position="179"/>
    </location>
    <ligand>
        <name>ATP</name>
        <dbReference type="ChEBI" id="CHEBI:30616"/>
    </ligand>
</feature>
<feature type="binding site" evidence="1">
    <location>
        <begin position="220"/>
        <end position="226"/>
    </location>
    <ligand>
        <name>ATP</name>
        <dbReference type="ChEBI" id="CHEBI:30616"/>
    </ligand>
</feature>
<gene>
    <name evidence="1" type="primary">proB</name>
    <name type="ordered locus">MXAN_1357</name>
</gene>
<sequence length="377" mass="39602">MSSISTGRTALRSARRVVVKIGTNALTNATGRFNRQHFDALGQDLLWAAQGRELVVVSSGAIALGVERLGLPSRPRDIPGKQACAAVGQSRLVQAYEEAFAAHGKAVAQVLLTHEDVQERRRYLNVKHTLERLLTAGVVPVINENDTVSVDELKFGDNDTLAGLVAGVVDADALVLLSDVEGLYTGDPRRDAGAELLATVMQVTPEVLALATGTSSGVGTGGMSTKVRAAARASDSGIHCVITSGAVPGRLRAVLEGADVGTHFEPTGSRRSARAAWIAHALRARGTLTVDAGAREAIVTGKRSLLPSGVRGVEGDFGRGDPVDLVDAEGAVFARGLAAYDANELRRIAGHRTADIEAVLGYRYLDEAVHRDDLAVL</sequence>
<proteinExistence type="inferred from homology"/>
<comment type="function">
    <text evidence="1">Catalyzes the transfer of a phosphate group to glutamate to form L-glutamate 5-phosphate.</text>
</comment>
<comment type="catalytic activity">
    <reaction evidence="1">
        <text>L-glutamate + ATP = L-glutamyl 5-phosphate + ADP</text>
        <dbReference type="Rhea" id="RHEA:14877"/>
        <dbReference type="ChEBI" id="CHEBI:29985"/>
        <dbReference type="ChEBI" id="CHEBI:30616"/>
        <dbReference type="ChEBI" id="CHEBI:58274"/>
        <dbReference type="ChEBI" id="CHEBI:456216"/>
        <dbReference type="EC" id="2.7.2.11"/>
    </reaction>
</comment>
<comment type="pathway">
    <text evidence="1">Amino-acid biosynthesis; L-proline biosynthesis; L-glutamate 5-semialdehyde from L-glutamate: step 1/2.</text>
</comment>
<comment type="subcellular location">
    <subcellularLocation>
        <location evidence="1">Cytoplasm</location>
    </subcellularLocation>
</comment>
<comment type="similarity">
    <text evidence="1">Belongs to the glutamate 5-kinase family.</text>
</comment>
<name>PROB_MYXXD</name>
<accession>Q1DCK9</accession>
<protein>
    <recommendedName>
        <fullName evidence="1">Glutamate 5-kinase</fullName>
        <ecNumber evidence="1">2.7.2.11</ecNumber>
    </recommendedName>
    <alternativeName>
        <fullName evidence="1">Gamma-glutamyl kinase</fullName>
        <shortName evidence="1">GK</shortName>
    </alternativeName>
</protein>
<evidence type="ECO:0000255" key="1">
    <source>
        <dbReference type="HAMAP-Rule" id="MF_00456"/>
    </source>
</evidence>